<reference key="1">
    <citation type="journal article" date="2004" name="Nat. Biotechnol.">
        <title>Complete sequence and comparative genome analysis of the dairy bacterium Streptococcus thermophilus.</title>
        <authorList>
            <person name="Bolotin A."/>
            <person name="Quinquis B."/>
            <person name="Renault P."/>
            <person name="Sorokin A."/>
            <person name="Ehrlich S.D."/>
            <person name="Kulakauskas S."/>
            <person name="Lapidus A."/>
            <person name="Goltsman E."/>
            <person name="Mazur M."/>
            <person name="Pusch G.D."/>
            <person name="Fonstein M."/>
            <person name="Overbeek R."/>
            <person name="Kyprides N."/>
            <person name="Purnelle B."/>
            <person name="Prozzi D."/>
            <person name="Ngui K."/>
            <person name="Masuy D."/>
            <person name="Hancy F."/>
            <person name="Burteau S."/>
            <person name="Boutry M."/>
            <person name="Delcour J."/>
            <person name="Goffeau A."/>
            <person name="Hols P."/>
        </authorList>
    </citation>
    <scope>NUCLEOTIDE SEQUENCE [LARGE SCALE GENOMIC DNA]</scope>
    <source>
        <strain>ATCC BAA-250 / LMG 18311</strain>
    </source>
</reference>
<organism>
    <name type="scientific">Streptococcus thermophilus (strain ATCC BAA-250 / LMG 18311)</name>
    <dbReference type="NCBI Taxonomy" id="264199"/>
    <lineage>
        <taxon>Bacteria</taxon>
        <taxon>Bacillati</taxon>
        <taxon>Bacillota</taxon>
        <taxon>Bacilli</taxon>
        <taxon>Lactobacillales</taxon>
        <taxon>Streptococcaceae</taxon>
        <taxon>Streptococcus</taxon>
    </lineage>
</organism>
<gene>
    <name evidence="1" type="primary">rpsD</name>
    <name type="ordered locus">stu1997</name>
</gene>
<evidence type="ECO:0000255" key="1">
    <source>
        <dbReference type="HAMAP-Rule" id="MF_01306"/>
    </source>
</evidence>
<evidence type="ECO:0000305" key="2"/>
<feature type="chain" id="PRO_0000228930" description="Small ribosomal subunit protein uS4">
    <location>
        <begin position="1"/>
        <end position="203"/>
    </location>
</feature>
<feature type="domain" description="S4 RNA-binding" evidence="1">
    <location>
        <begin position="93"/>
        <end position="156"/>
    </location>
</feature>
<sequence length="203" mass="23071">MSRYTGPSWKQSRRLGFSLTGTGKELARRNYVPGQHGPNNRSKLSEYGLQLAEKQKLRFSYGLSEKQFRNLFVQATKVKGGTLGFNFMILLERRLDNVVYRLGLATTRRQARQFVNHGHILVDGKRVDIPSYRVEVGQVISVREKSAKVPAILEAVEATIGRPAFVSFDAEKLEGSLTRLPERDEINPEINEALVVEFYNKML</sequence>
<protein>
    <recommendedName>
        <fullName evidence="1">Small ribosomal subunit protein uS4</fullName>
    </recommendedName>
    <alternativeName>
        <fullName evidence="2">30S ribosomal protein S4</fullName>
    </alternativeName>
</protein>
<comment type="function">
    <text evidence="1">One of the primary rRNA binding proteins, it binds directly to 16S rRNA where it nucleates assembly of the body of the 30S subunit.</text>
</comment>
<comment type="function">
    <text evidence="1">With S5 and S12 plays an important role in translational accuracy.</text>
</comment>
<comment type="subunit">
    <text evidence="1">Part of the 30S ribosomal subunit. Contacts protein S5. The interaction surface between S4 and S5 is involved in control of translational fidelity.</text>
</comment>
<comment type="similarity">
    <text evidence="1">Belongs to the universal ribosomal protein uS4 family.</text>
</comment>
<comment type="sequence caution" evidence="2">
    <conflict type="erroneous initiation">
        <sequence resource="EMBL-CDS" id="AAV61591"/>
    </conflict>
</comment>
<name>RS4_STRT2</name>
<accession>Q5M255</accession>
<dbReference type="EMBL" id="CP000023">
    <property type="protein sequence ID" value="AAV61591.1"/>
    <property type="status" value="ALT_INIT"/>
    <property type="molecule type" value="Genomic_DNA"/>
</dbReference>
<dbReference type="RefSeq" id="WP_002952258.1">
    <property type="nucleotide sequence ID" value="NC_006448.1"/>
</dbReference>
<dbReference type="SMR" id="Q5M255"/>
<dbReference type="STRING" id="264199.stu1997"/>
<dbReference type="GeneID" id="66899723"/>
<dbReference type="KEGG" id="stl:stu1997"/>
<dbReference type="eggNOG" id="COG0522">
    <property type="taxonomic scope" value="Bacteria"/>
</dbReference>
<dbReference type="HOGENOM" id="CLU_092403_0_1_9"/>
<dbReference type="Proteomes" id="UP000001170">
    <property type="component" value="Chromosome"/>
</dbReference>
<dbReference type="GO" id="GO:0015935">
    <property type="term" value="C:small ribosomal subunit"/>
    <property type="evidence" value="ECO:0007669"/>
    <property type="project" value="InterPro"/>
</dbReference>
<dbReference type="GO" id="GO:0019843">
    <property type="term" value="F:rRNA binding"/>
    <property type="evidence" value="ECO:0007669"/>
    <property type="project" value="UniProtKB-UniRule"/>
</dbReference>
<dbReference type="GO" id="GO:0003735">
    <property type="term" value="F:structural constituent of ribosome"/>
    <property type="evidence" value="ECO:0007669"/>
    <property type="project" value="InterPro"/>
</dbReference>
<dbReference type="GO" id="GO:0042274">
    <property type="term" value="P:ribosomal small subunit biogenesis"/>
    <property type="evidence" value="ECO:0007669"/>
    <property type="project" value="TreeGrafter"/>
</dbReference>
<dbReference type="GO" id="GO:0006412">
    <property type="term" value="P:translation"/>
    <property type="evidence" value="ECO:0007669"/>
    <property type="project" value="UniProtKB-UniRule"/>
</dbReference>
<dbReference type="CDD" id="cd00165">
    <property type="entry name" value="S4"/>
    <property type="match status" value="1"/>
</dbReference>
<dbReference type="FunFam" id="1.10.1050.10:FF:000001">
    <property type="entry name" value="30S ribosomal protein S4"/>
    <property type="match status" value="1"/>
</dbReference>
<dbReference type="FunFam" id="3.10.290.10:FF:000001">
    <property type="entry name" value="30S ribosomal protein S4"/>
    <property type="match status" value="1"/>
</dbReference>
<dbReference type="Gene3D" id="1.10.1050.10">
    <property type="entry name" value="Ribosomal Protein S4 Delta 41, Chain A, domain 1"/>
    <property type="match status" value="1"/>
</dbReference>
<dbReference type="Gene3D" id="3.10.290.10">
    <property type="entry name" value="RNA-binding S4 domain"/>
    <property type="match status" value="1"/>
</dbReference>
<dbReference type="HAMAP" id="MF_01306_B">
    <property type="entry name" value="Ribosomal_uS4_B"/>
    <property type="match status" value="1"/>
</dbReference>
<dbReference type="InterPro" id="IPR022801">
    <property type="entry name" value="Ribosomal_uS4"/>
</dbReference>
<dbReference type="InterPro" id="IPR005709">
    <property type="entry name" value="Ribosomal_uS4_bac-type"/>
</dbReference>
<dbReference type="InterPro" id="IPR018079">
    <property type="entry name" value="Ribosomal_uS4_CS"/>
</dbReference>
<dbReference type="InterPro" id="IPR001912">
    <property type="entry name" value="Ribosomal_uS4_N"/>
</dbReference>
<dbReference type="InterPro" id="IPR002942">
    <property type="entry name" value="S4_RNA-bd"/>
</dbReference>
<dbReference type="InterPro" id="IPR036986">
    <property type="entry name" value="S4_RNA-bd_sf"/>
</dbReference>
<dbReference type="NCBIfam" id="NF003717">
    <property type="entry name" value="PRK05327.1"/>
    <property type="match status" value="1"/>
</dbReference>
<dbReference type="NCBIfam" id="TIGR01017">
    <property type="entry name" value="rpsD_bact"/>
    <property type="match status" value="1"/>
</dbReference>
<dbReference type="PANTHER" id="PTHR11831">
    <property type="entry name" value="30S 40S RIBOSOMAL PROTEIN"/>
    <property type="match status" value="1"/>
</dbReference>
<dbReference type="PANTHER" id="PTHR11831:SF4">
    <property type="entry name" value="SMALL RIBOSOMAL SUBUNIT PROTEIN US4M"/>
    <property type="match status" value="1"/>
</dbReference>
<dbReference type="Pfam" id="PF00163">
    <property type="entry name" value="Ribosomal_S4"/>
    <property type="match status" value="1"/>
</dbReference>
<dbReference type="Pfam" id="PF01479">
    <property type="entry name" value="S4"/>
    <property type="match status" value="1"/>
</dbReference>
<dbReference type="SMART" id="SM01390">
    <property type="entry name" value="Ribosomal_S4"/>
    <property type="match status" value="1"/>
</dbReference>
<dbReference type="SMART" id="SM00363">
    <property type="entry name" value="S4"/>
    <property type="match status" value="1"/>
</dbReference>
<dbReference type="SUPFAM" id="SSF55174">
    <property type="entry name" value="Alpha-L RNA-binding motif"/>
    <property type="match status" value="1"/>
</dbReference>
<dbReference type="PROSITE" id="PS00632">
    <property type="entry name" value="RIBOSOMAL_S4"/>
    <property type="match status" value="1"/>
</dbReference>
<dbReference type="PROSITE" id="PS50889">
    <property type="entry name" value="S4"/>
    <property type="match status" value="1"/>
</dbReference>
<keyword id="KW-1185">Reference proteome</keyword>
<keyword id="KW-0687">Ribonucleoprotein</keyword>
<keyword id="KW-0689">Ribosomal protein</keyword>
<keyword id="KW-0694">RNA-binding</keyword>
<keyword id="KW-0699">rRNA-binding</keyword>
<proteinExistence type="inferred from homology"/>